<reference key="1">
    <citation type="submission" date="1996-10" db="EMBL/GenBank/DDBJ databases">
        <authorList>
            <person name="Marchant J.E."/>
            <person name="Henderson J."/>
            <person name="Wren B.W."/>
            <person name="Ketley J.M."/>
        </authorList>
    </citation>
    <scope>NUCLEOTIDE SEQUENCE [GENOMIC DNA]</scope>
</reference>
<reference key="2">
    <citation type="journal article" date="1998" name="Microbiology">
        <title>The lipopolysaccharide biosynthesis locus of Campylobacter jejuni 81116.</title>
        <authorList>
            <person name="Fry B.N."/>
            <person name="Korolik V."/>
            <person name="ten Brinke J.A."/>
            <person name="Pennings M.T.T."/>
            <person name="Zalm R."/>
            <person name="Teunis B.J.J."/>
            <person name="Coloe P.J."/>
            <person name="van der Zeijst B.A.M."/>
        </authorList>
    </citation>
    <scope>NUCLEOTIDE SEQUENCE [GENOMIC DNA]</scope>
</reference>
<reference key="3">
    <citation type="journal article" date="2007" name="J. Bacteriol.">
        <title>The complete genome sequence of Campylobacter jejuni strain 81116 (NCTC11828).</title>
        <authorList>
            <person name="Pearson B.M."/>
            <person name="Gaskin D.J.H."/>
            <person name="Segers R.P.A.M."/>
            <person name="Wells J.M."/>
            <person name="Nuijten P.J.M."/>
            <person name="van Vliet A.H.M."/>
        </authorList>
    </citation>
    <scope>NUCLEOTIDE SEQUENCE [LARGE SCALE GENOMIC DNA]</scope>
    <source>
        <strain>81116 / NCTC 11828</strain>
    </source>
</reference>
<sequence>MKLLVVDDSSTMRRIIKNTLTRLGHDDVLEAEHGVEAWDLLTKNEDVKVLITDWNMPEMNGLELVKKVRAEKKYEDMPIIMVTTEGGKAEVITALKAGVNNYIVKPFTPQVLKEKLEDVLGTGSGEGAAE</sequence>
<evidence type="ECO:0000250" key="1">
    <source>
        <dbReference type="UniProtKB" id="A0A0H3AMJ9"/>
    </source>
</evidence>
<evidence type="ECO:0000250" key="2">
    <source>
        <dbReference type="UniProtKB" id="P0AE67"/>
    </source>
</evidence>
<evidence type="ECO:0000255" key="3">
    <source>
        <dbReference type="PROSITE-ProRule" id="PRU00169"/>
    </source>
</evidence>
<evidence type="ECO:0000305" key="4"/>
<gene>
    <name type="primary">cheY</name>
    <name type="ordered locus">C8J_1059</name>
</gene>
<comment type="function">
    <text evidence="2">Involved in the transmission of sensory signals from the chemoreceptors to the flagellar motors. CheY seems to regulate the clockwise (CW) rotation (By similarity).</text>
</comment>
<comment type="cofactor">
    <cofactor evidence="2">
        <name>Mg(2+)</name>
        <dbReference type="ChEBI" id="CHEBI:18420"/>
    </cofactor>
    <text evidence="2">Binds 1 Mg(2+) ion per subunit.</text>
</comment>
<comment type="subcellular location">
    <subcellularLocation>
        <location evidence="4">Cytoplasm</location>
    </subcellularLocation>
</comment>
<feature type="chain" id="PRO_0000315387" description="Chemotaxis protein CheY homolog">
    <location>
        <begin position="1"/>
        <end position="130"/>
    </location>
</feature>
<feature type="domain" description="Response regulatory" evidence="3">
    <location>
        <begin position="2"/>
        <end position="120"/>
    </location>
</feature>
<feature type="binding site" evidence="1">
    <location>
        <position position="7"/>
    </location>
    <ligand>
        <name>Mg(2+)</name>
        <dbReference type="ChEBI" id="CHEBI:18420"/>
    </ligand>
</feature>
<feature type="binding site" evidence="2">
    <location>
        <position position="8"/>
    </location>
    <ligand>
        <name>Mg(2+)</name>
        <dbReference type="ChEBI" id="CHEBI:18420"/>
    </ligand>
</feature>
<feature type="binding site" evidence="2">
    <location>
        <position position="53"/>
    </location>
    <ligand>
        <name>Mg(2+)</name>
        <dbReference type="ChEBI" id="CHEBI:18420"/>
    </ligand>
</feature>
<feature type="binding site" evidence="2">
    <location>
        <position position="55"/>
    </location>
    <ligand>
        <name>Mg(2+)</name>
        <dbReference type="ChEBI" id="CHEBI:18420"/>
    </ligand>
</feature>
<feature type="modified residue" description="4-aspartylphosphate" evidence="3">
    <location>
        <position position="53"/>
    </location>
</feature>
<proteinExistence type="inferred from homology"/>
<protein>
    <recommendedName>
        <fullName>Chemotaxis protein CheY homolog</fullName>
    </recommendedName>
</protein>
<organism>
    <name type="scientific">Campylobacter jejuni subsp. jejuni serotype O:6 (strain 81116 / NCTC 11828)</name>
    <dbReference type="NCBI Taxonomy" id="407148"/>
    <lineage>
        <taxon>Bacteria</taxon>
        <taxon>Pseudomonadati</taxon>
        <taxon>Campylobacterota</taxon>
        <taxon>Epsilonproteobacteria</taxon>
        <taxon>Campylobacterales</taxon>
        <taxon>Campylobacteraceae</taxon>
        <taxon>Campylobacter</taxon>
    </lineage>
</organism>
<keyword id="KW-0145">Chemotaxis</keyword>
<keyword id="KW-0963">Cytoplasm</keyword>
<keyword id="KW-0283">Flagellar rotation</keyword>
<keyword id="KW-0460">Magnesium</keyword>
<keyword id="KW-0479">Metal-binding</keyword>
<keyword id="KW-0597">Phosphoprotein</keyword>
<keyword id="KW-0902">Two-component regulatory system</keyword>
<accession>A8FMH1</accession>
<accession>P71129</accession>
<accession>Q0P9D6</accession>
<dbReference type="EMBL" id="U75208">
    <property type="protein sequence ID" value="AAB17571.1"/>
    <property type="molecule type" value="Genomic_DNA"/>
</dbReference>
<dbReference type="EMBL" id="Y11648">
    <property type="protein sequence ID" value="CAA72347.1"/>
    <property type="molecule type" value="Genomic_DNA"/>
</dbReference>
<dbReference type="EMBL" id="CP000814">
    <property type="protein sequence ID" value="ABV52658.1"/>
    <property type="molecule type" value="Genomic_DNA"/>
</dbReference>
<dbReference type="RefSeq" id="WP_002866134.1">
    <property type="nucleotide sequence ID" value="NC_009839.1"/>
</dbReference>
<dbReference type="SMR" id="A8FMH1"/>
<dbReference type="KEGG" id="cju:C8J_1059"/>
<dbReference type="HOGENOM" id="CLU_000445_69_12_7"/>
<dbReference type="GO" id="GO:0005737">
    <property type="term" value="C:cytoplasm"/>
    <property type="evidence" value="ECO:0007669"/>
    <property type="project" value="UniProtKB-SubCell"/>
</dbReference>
<dbReference type="GO" id="GO:0046872">
    <property type="term" value="F:metal ion binding"/>
    <property type="evidence" value="ECO:0007669"/>
    <property type="project" value="UniProtKB-KW"/>
</dbReference>
<dbReference type="GO" id="GO:0097588">
    <property type="term" value="P:archaeal or bacterial-type flagellum-dependent cell motility"/>
    <property type="evidence" value="ECO:0007669"/>
    <property type="project" value="UniProtKB-KW"/>
</dbReference>
<dbReference type="GO" id="GO:0006935">
    <property type="term" value="P:chemotaxis"/>
    <property type="evidence" value="ECO:0007669"/>
    <property type="project" value="UniProtKB-KW"/>
</dbReference>
<dbReference type="GO" id="GO:0000160">
    <property type="term" value="P:phosphorelay signal transduction system"/>
    <property type="evidence" value="ECO:0007669"/>
    <property type="project" value="UniProtKB-KW"/>
</dbReference>
<dbReference type="CDD" id="cd19923">
    <property type="entry name" value="REC_CheY_CheY3"/>
    <property type="match status" value="1"/>
</dbReference>
<dbReference type="Gene3D" id="3.40.50.2300">
    <property type="match status" value="1"/>
</dbReference>
<dbReference type="InterPro" id="IPR050595">
    <property type="entry name" value="Bact_response_regulator"/>
</dbReference>
<dbReference type="InterPro" id="IPR011006">
    <property type="entry name" value="CheY-like_superfamily"/>
</dbReference>
<dbReference type="InterPro" id="IPR001789">
    <property type="entry name" value="Sig_transdc_resp-reg_receiver"/>
</dbReference>
<dbReference type="PANTHER" id="PTHR44591:SF14">
    <property type="entry name" value="PROTEIN PILG"/>
    <property type="match status" value="1"/>
</dbReference>
<dbReference type="PANTHER" id="PTHR44591">
    <property type="entry name" value="STRESS RESPONSE REGULATOR PROTEIN 1"/>
    <property type="match status" value="1"/>
</dbReference>
<dbReference type="Pfam" id="PF00072">
    <property type="entry name" value="Response_reg"/>
    <property type="match status" value="1"/>
</dbReference>
<dbReference type="SMART" id="SM00448">
    <property type="entry name" value="REC"/>
    <property type="match status" value="1"/>
</dbReference>
<dbReference type="SUPFAM" id="SSF52172">
    <property type="entry name" value="CheY-like"/>
    <property type="match status" value="1"/>
</dbReference>
<dbReference type="PROSITE" id="PS50110">
    <property type="entry name" value="RESPONSE_REGULATORY"/>
    <property type="match status" value="1"/>
</dbReference>
<name>CHEY_CAMJ8</name>